<accession>Q58622</accession>
<protein>
    <recommendedName>
        <fullName>Uncharacterized protein MJ1225</fullName>
    </recommendedName>
</protein>
<keyword id="KW-0002">3D-structure</keyword>
<keyword id="KW-0129">CBS domain</keyword>
<keyword id="KW-1185">Reference proteome</keyword>
<keyword id="KW-0677">Repeat</keyword>
<reference key="1">
    <citation type="journal article" date="1996" name="Science">
        <title>Complete genome sequence of the methanogenic archaeon, Methanococcus jannaschii.</title>
        <authorList>
            <person name="Bult C.J."/>
            <person name="White O."/>
            <person name="Olsen G.J."/>
            <person name="Zhou L."/>
            <person name="Fleischmann R.D."/>
            <person name="Sutton G.G."/>
            <person name="Blake J.A."/>
            <person name="FitzGerald L.M."/>
            <person name="Clayton R.A."/>
            <person name="Gocayne J.D."/>
            <person name="Kerlavage A.R."/>
            <person name="Dougherty B.A."/>
            <person name="Tomb J.-F."/>
            <person name="Adams M.D."/>
            <person name="Reich C.I."/>
            <person name="Overbeek R."/>
            <person name="Kirkness E.F."/>
            <person name="Weinstock K.G."/>
            <person name="Merrick J.M."/>
            <person name="Glodek A."/>
            <person name="Scott J.L."/>
            <person name="Geoghagen N.S.M."/>
            <person name="Weidman J.F."/>
            <person name="Fuhrmann J.L."/>
            <person name="Nguyen D."/>
            <person name="Utterback T.R."/>
            <person name="Kelley J.M."/>
            <person name="Peterson J.D."/>
            <person name="Sadow P.W."/>
            <person name="Hanna M.C."/>
            <person name="Cotton M.D."/>
            <person name="Roberts K.M."/>
            <person name="Hurst M.A."/>
            <person name="Kaine B.P."/>
            <person name="Borodovsky M."/>
            <person name="Klenk H.-P."/>
            <person name="Fraser C.M."/>
            <person name="Smith H.O."/>
            <person name="Woese C.R."/>
            <person name="Venter J.C."/>
        </authorList>
    </citation>
    <scope>NUCLEOTIDE SEQUENCE [LARGE SCALE GENOMIC DNA]</scope>
    <source>
        <strain>ATCC 43067 / DSM 2661 / JAL-1 / JCM 10045 / NBRC 100440</strain>
    </source>
</reference>
<feature type="chain" id="PRO_0000107226" description="Uncharacterized protein MJ1225">
    <location>
        <begin position="1"/>
        <end position="280"/>
    </location>
</feature>
<feature type="domain" description="CBS 1" evidence="1">
    <location>
        <begin position="10"/>
        <end position="67"/>
    </location>
</feature>
<feature type="domain" description="CBS 2" evidence="1">
    <location>
        <begin position="90"/>
        <end position="146"/>
    </location>
</feature>
<feature type="domain" description="CBS 3" evidence="1">
    <location>
        <begin position="154"/>
        <end position="209"/>
    </location>
</feature>
<feature type="domain" description="CBS 4" evidence="1">
    <location>
        <begin position="229"/>
        <end position="280"/>
    </location>
</feature>
<feature type="helix" evidence="2">
    <location>
        <begin position="5"/>
        <end position="7"/>
    </location>
</feature>
<feature type="helix" evidence="2">
    <location>
        <begin position="23"/>
        <end position="33"/>
    </location>
</feature>
<feature type="strand" evidence="2">
    <location>
        <begin position="37"/>
        <end position="41"/>
    </location>
</feature>
<feature type="turn" evidence="2">
    <location>
        <begin position="43"/>
        <end position="45"/>
    </location>
</feature>
<feature type="strand" evidence="2">
    <location>
        <begin position="47"/>
        <end position="53"/>
    </location>
</feature>
<feature type="helix" evidence="2">
    <location>
        <begin position="54"/>
        <end position="60"/>
    </location>
</feature>
<feature type="turn" evidence="2">
    <location>
        <begin position="61"/>
        <end position="63"/>
    </location>
</feature>
<feature type="helix" evidence="2">
    <location>
        <begin position="65"/>
        <end position="67"/>
    </location>
</feature>
<feature type="helix" evidence="2">
    <location>
        <begin position="68"/>
        <end position="71"/>
    </location>
</feature>
<feature type="turn" evidence="3">
    <location>
        <begin position="72"/>
        <end position="76"/>
    </location>
</feature>
<feature type="helix" evidence="2">
    <location>
        <begin position="78"/>
        <end position="81"/>
    </location>
</feature>
<feature type="helix" evidence="2">
    <location>
        <begin position="86"/>
        <end position="88"/>
    </location>
</feature>
<feature type="helix" evidence="2">
    <location>
        <begin position="103"/>
        <end position="112"/>
    </location>
</feature>
<feature type="strand" evidence="2">
    <location>
        <begin position="116"/>
        <end position="121"/>
    </location>
</feature>
<feature type="strand" evidence="2">
    <location>
        <begin position="126"/>
        <end position="132"/>
    </location>
</feature>
<feature type="helix" evidence="2">
    <location>
        <begin position="133"/>
        <end position="140"/>
    </location>
</feature>
<feature type="helix" evidence="2">
    <location>
        <begin position="141"/>
        <end position="143"/>
    </location>
</feature>
<feature type="helix" evidence="2">
    <location>
        <begin position="151"/>
        <end position="153"/>
    </location>
</feature>
<feature type="helix" evidence="2">
    <location>
        <begin position="167"/>
        <end position="177"/>
    </location>
</feature>
<feature type="strand" evidence="2">
    <location>
        <begin position="180"/>
        <end position="186"/>
    </location>
</feature>
<feature type="strand" evidence="2">
    <location>
        <begin position="189"/>
        <end position="195"/>
    </location>
</feature>
<feature type="helix" evidence="2">
    <location>
        <begin position="196"/>
        <end position="203"/>
    </location>
</feature>
<feature type="helix" evidence="2">
    <location>
        <begin position="206"/>
        <end position="213"/>
    </location>
</feature>
<feature type="helix" evidence="2">
    <location>
        <begin position="218"/>
        <end position="222"/>
    </location>
</feature>
<feature type="helix" evidence="2">
    <location>
        <begin position="225"/>
        <end position="228"/>
    </location>
</feature>
<feature type="strand" evidence="2">
    <location>
        <begin position="229"/>
        <end position="232"/>
    </location>
</feature>
<feature type="helix" evidence="2">
    <location>
        <begin position="242"/>
        <end position="251"/>
    </location>
</feature>
<feature type="strand" evidence="2">
    <location>
        <begin position="256"/>
        <end position="260"/>
    </location>
</feature>
<feature type="strand" evidence="2">
    <location>
        <begin position="265"/>
        <end position="271"/>
    </location>
</feature>
<feature type="helix" evidence="2">
    <location>
        <begin position="272"/>
        <end position="275"/>
    </location>
</feature>
<feature type="helix" evidence="2">
    <location>
        <begin position="276"/>
        <end position="279"/>
    </location>
</feature>
<sequence length="280" mass="31719">MFVRVMKIAQNKKIVTVYPTTTIRKALMTMNENKYRRLPVVNAGNNKVVGIITSMDIVDFMGGGSKYNLIREKHERNFLAAINEPVREIMEENVITLKENADIDEAIETFLTKNVGGAPIVNDENQLISLITERDVIRALLDKIDENEVIDDYITRDVIVATPGERLKDVARTMVRNGFRRLPVVSEGRLVGIITSTDFIKLLGSDWAFNHMQTGNVREITNVRMEEIMKRDVITAKEGDKLKKIAEIMVTNDIGALPVVDENLRIKGIITEKDVLKYFA</sequence>
<organism>
    <name type="scientific">Methanocaldococcus jannaschii (strain ATCC 43067 / DSM 2661 / JAL-1 / JCM 10045 / NBRC 100440)</name>
    <name type="common">Methanococcus jannaschii</name>
    <dbReference type="NCBI Taxonomy" id="243232"/>
    <lineage>
        <taxon>Archaea</taxon>
        <taxon>Methanobacteriati</taxon>
        <taxon>Methanobacteriota</taxon>
        <taxon>Methanomada group</taxon>
        <taxon>Methanococci</taxon>
        <taxon>Methanococcales</taxon>
        <taxon>Methanocaldococcaceae</taxon>
        <taxon>Methanocaldococcus</taxon>
    </lineage>
</organism>
<evidence type="ECO:0000255" key="1">
    <source>
        <dbReference type="PROSITE-ProRule" id="PRU00703"/>
    </source>
</evidence>
<evidence type="ECO:0007829" key="2">
    <source>
        <dbReference type="PDB" id="3KH5"/>
    </source>
</evidence>
<evidence type="ECO:0007829" key="3">
    <source>
        <dbReference type="PDB" id="3LFZ"/>
    </source>
</evidence>
<proteinExistence type="evidence at protein level"/>
<gene>
    <name type="ordered locus">MJ1225</name>
</gene>
<name>Y1225_METJA</name>
<dbReference type="EMBL" id="L77117">
    <property type="protein sequence ID" value="AAB99228.1"/>
    <property type="molecule type" value="Genomic_DNA"/>
</dbReference>
<dbReference type="PIR" id="H64452">
    <property type="entry name" value="H64452"/>
</dbReference>
<dbReference type="RefSeq" id="WP_010870737.1">
    <property type="nucleotide sequence ID" value="NC_000909.1"/>
</dbReference>
<dbReference type="PDB" id="3KH5">
    <property type="method" value="X-ray"/>
    <property type="resolution" value="2.10 A"/>
    <property type="chains" value="A=1-280"/>
</dbReference>
<dbReference type="PDB" id="3LFZ">
    <property type="method" value="X-ray"/>
    <property type="resolution" value="2.20 A"/>
    <property type="chains" value="A=1-280"/>
</dbReference>
<dbReference type="PDBsum" id="3KH5"/>
<dbReference type="PDBsum" id="3LFZ"/>
<dbReference type="SMR" id="Q58622"/>
<dbReference type="FunCoup" id="Q58622">
    <property type="interactions" value="20"/>
</dbReference>
<dbReference type="STRING" id="243232.MJ_1225"/>
<dbReference type="PaxDb" id="243232-MJ_1225"/>
<dbReference type="EnsemblBacteria" id="AAB99228">
    <property type="protein sequence ID" value="AAB99228"/>
    <property type="gene ID" value="MJ_1225"/>
</dbReference>
<dbReference type="GeneID" id="1452121"/>
<dbReference type="KEGG" id="mja:MJ_1225"/>
<dbReference type="eggNOG" id="arCOG00600">
    <property type="taxonomic scope" value="Archaea"/>
</dbReference>
<dbReference type="HOGENOM" id="CLU_076812_0_0_2"/>
<dbReference type="InParanoid" id="Q58622"/>
<dbReference type="PhylomeDB" id="Q58622"/>
<dbReference type="EvolutionaryTrace" id="Q58622"/>
<dbReference type="Proteomes" id="UP000000805">
    <property type="component" value="Chromosome"/>
</dbReference>
<dbReference type="CDD" id="cd17779">
    <property type="entry name" value="CBS_archAMPK_gamma-repeat1"/>
    <property type="match status" value="1"/>
</dbReference>
<dbReference type="CDD" id="cd04631">
    <property type="entry name" value="CBS_archAMPK_gamma-repeat2"/>
    <property type="match status" value="1"/>
</dbReference>
<dbReference type="Gene3D" id="3.10.580.10">
    <property type="entry name" value="CBS-domain"/>
    <property type="match status" value="2"/>
</dbReference>
<dbReference type="InterPro" id="IPR000644">
    <property type="entry name" value="CBS_dom"/>
</dbReference>
<dbReference type="InterPro" id="IPR046342">
    <property type="entry name" value="CBS_dom_sf"/>
</dbReference>
<dbReference type="InterPro" id="IPR051257">
    <property type="entry name" value="Diverse_CBS-Domain"/>
</dbReference>
<dbReference type="PANTHER" id="PTHR43080:SF2">
    <property type="entry name" value="CBS DOMAIN-CONTAINING PROTEIN"/>
    <property type="match status" value="1"/>
</dbReference>
<dbReference type="PANTHER" id="PTHR43080">
    <property type="entry name" value="CBS DOMAIN-CONTAINING PROTEIN CBSX3, MITOCHONDRIAL"/>
    <property type="match status" value="1"/>
</dbReference>
<dbReference type="Pfam" id="PF00571">
    <property type="entry name" value="CBS"/>
    <property type="match status" value="4"/>
</dbReference>
<dbReference type="SMART" id="SM00116">
    <property type="entry name" value="CBS"/>
    <property type="match status" value="4"/>
</dbReference>
<dbReference type="SUPFAM" id="SSF54631">
    <property type="entry name" value="CBS-domain pair"/>
    <property type="match status" value="2"/>
</dbReference>
<dbReference type="PROSITE" id="PS51371">
    <property type="entry name" value="CBS"/>
    <property type="match status" value="4"/>
</dbReference>